<feature type="chain" id="PRO_0000117958" description="NADH-ubiquinone oxidoreductase chain 4">
    <location>
        <begin position="1"/>
        <end position="435"/>
    </location>
</feature>
<feature type="transmembrane region" description="Helical" evidence="2">
    <location>
        <begin position="27"/>
        <end position="47"/>
    </location>
</feature>
<feature type="transmembrane region" description="Helical" evidence="2">
    <location>
        <begin position="53"/>
        <end position="73"/>
    </location>
</feature>
<feature type="transmembrane region" description="Helical" evidence="2">
    <location>
        <begin position="80"/>
        <end position="100"/>
    </location>
</feature>
<feature type="transmembrane region" description="Helical" evidence="2">
    <location>
        <begin position="102"/>
        <end position="122"/>
    </location>
</feature>
<feature type="transmembrane region" description="Helical" evidence="2">
    <location>
        <begin position="132"/>
        <end position="152"/>
    </location>
</feature>
<feature type="transmembrane region" description="Helical" evidence="2">
    <location>
        <begin position="177"/>
        <end position="197"/>
    </location>
</feature>
<feature type="transmembrane region" description="Helical" evidence="2">
    <location>
        <begin position="206"/>
        <end position="226"/>
    </location>
</feature>
<feature type="transmembrane region" description="Helical" evidence="2">
    <location>
        <begin position="239"/>
        <end position="259"/>
    </location>
</feature>
<feature type="transmembrane region" description="Helical" evidence="2">
    <location>
        <begin position="267"/>
        <end position="285"/>
    </location>
</feature>
<feature type="transmembrane region" description="Helical" evidence="2">
    <location>
        <begin position="295"/>
        <end position="317"/>
    </location>
</feature>
<feature type="transmembrane region" description="Helical" evidence="2">
    <location>
        <begin position="324"/>
        <end position="344"/>
    </location>
</feature>
<feature type="transmembrane region" description="Helical" evidence="2">
    <location>
        <begin position="372"/>
        <end position="394"/>
    </location>
</feature>
<feature type="transmembrane region" description="Helical" evidence="2">
    <location>
        <begin position="414"/>
        <end position="434"/>
    </location>
</feature>
<sequence length="435" mass="47027">MVKSLAISLIALIIMKNLNVSIIGLSVLTILSMGAASVATGGVELNGLYSTDFVMGLMITLTLFVAILSYLSSAKVSRKASFNLMVISISLILVMSFSVSSFFLFFFFFESVLAPLLLLIVGWGYQPERLQAGGYMVIYTVFGSLFFLWGVSELYLSGMSSSMSSVGSLVKKSAMSLWWLYILGFLIKLPMYPFHLWLPKAHVEAPVAGSMLLAGVVLKLGGYGLLRFMLVMQVSLSSVFFVLLLSVNLAGGFYAGLACVRQVDLKCLVAYSSVAHMSLVLLGVLSNTLLGVMGAIIIMVGHGLCSSGLFSYVNAIYKMSHSRLLVMNKGGXLFCPVLVLMCFLLSSSNMAAPPSLNLFGEILVFGVGGXXSXAFLFILGLMSFISACFSLYLYGSCSHGKGLMHSESLNLSSLCDVFVLLSHWVPLNFLFMFMP</sequence>
<name>NU4M_MYTED</name>
<dbReference type="EC" id="7.1.1.2"/>
<dbReference type="EMBL" id="AY484747">
    <property type="protein sequence ID" value="AAT98410.1"/>
    <property type="molecule type" value="Genomic_DNA"/>
</dbReference>
<dbReference type="PIR" id="S28751">
    <property type="entry name" value="S28751"/>
</dbReference>
<dbReference type="RefSeq" id="YP_073339.1">
    <property type="nucleotide sequence ID" value="NC_006161.1"/>
</dbReference>
<dbReference type="GO" id="GO:0031966">
    <property type="term" value="C:mitochondrial membrane"/>
    <property type="evidence" value="ECO:0007669"/>
    <property type="project" value="UniProtKB-SubCell"/>
</dbReference>
<dbReference type="GO" id="GO:0008137">
    <property type="term" value="F:NADH dehydrogenase (ubiquinone) activity"/>
    <property type="evidence" value="ECO:0007669"/>
    <property type="project" value="UniProtKB-EC"/>
</dbReference>
<dbReference type="GO" id="GO:0048039">
    <property type="term" value="F:ubiquinone binding"/>
    <property type="evidence" value="ECO:0007669"/>
    <property type="project" value="TreeGrafter"/>
</dbReference>
<dbReference type="GO" id="GO:0042773">
    <property type="term" value="P:ATP synthesis coupled electron transport"/>
    <property type="evidence" value="ECO:0007669"/>
    <property type="project" value="InterPro"/>
</dbReference>
<dbReference type="GO" id="GO:0015990">
    <property type="term" value="P:electron transport coupled proton transport"/>
    <property type="evidence" value="ECO:0007669"/>
    <property type="project" value="TreeGrafter"/>
</dbReference>
<dbReference type="InterPro" id="IPR003918">
    <property type="entry name" value="NADH_UbQ_OxRdtase"/>
</dbReference>
<dbReference type="InterPro" id="IPR001750">
    <property type="entry name" value="ND/Mrp_TM"/>
</dbReference>
<dbReference type="PANTHER" id="PTHR43507">
    <property type="entry name" value="NADH-UBIQUINONE OXIDOREDUCTASE CHAIN 4"/>
    <property type="match status" value="1"/>
</dbReference>
<dbReference type="PANTHER" id="PTHR43507:SF20">
    <property type="entry name" value="NADH-UBIQUINONE OXIDOREDUCTASE CHAIN 4"/>
    <property type="match status" value="1"/>
</dbReference>
<dbReference type="Pfam" id="PF00361">
    <property type="entry name" value="Proton_antipo_M"/>
    <property type="match status" value="1"/>
</dbReference>
<dbReference type="PRINTS" id="PR01437">
    <property type="entry name" value="NUOXDRDTASE4"/>
</dbReference>
<gene>
    <name type="primary">ND4</name>
</gene>
<accession>Q00231</accession>
<accession>Q68SR4</accession>
<reference key="1">
    <citation type="journal article" date="2004" name="Mol. Biol. Evol.">
        <title>Complete sequences of the highly rearranged molluscan mitochondrial genomes of the scaphopod Graptacme eborea and the bivalve Mytilus edulis.</title>
        <authorList>
            <person name="Boore J.L."/>
            <person name="Medina M."/>
            <person name="Rosenberg L.A."/>
        </authorList>
    </citation>
    <scope>NUCLEOTIDE SEQUENCE [GENOMIC DNA]</scope>
    <scope>SEQUENCE REVISION TO 293-294</scope>
</reference>
<reference key="2">
    <citation type="journal article" date="1992" name="Genetics">
        <title>A novel mitochondrial genome organization for the blue mussel, Mytilus edulis.</title>
        <authorList>
            <person name="Hoffmann R.J."/>
            <person name="Boore J.L."/>
            <person name="Brown W.M."/>
        </authorList>
    </citation>
    <scope>NUCLEOTIDE SEQUENCE [GENOMIC DNA] OF 1-145 AND 294-435</scope>
</reference>
<evidence type="ECO:0000250" key="1"/>
<evidence type="ECO:0000255" key="2"/>
<evidence type="ECO:0000305" key="3"/>
<comment type="function">
    <text evidence="1">Core subunit of the mitochondrial membrane respiratory chain NADH dehydrogenase (Complex I) that is believed to belong to the minimal assembly required for catalysis. Complex I functions in the transfer of electrons from NADH to the respiratory chain. The immediate electron acceptor for the enzyme is believed to be ubiquinone (By similarity).</text>
</comment>
<comment type="catalytic activity">
    <reaction>
        <text>a ubiquinone + NADH + 5 H(+)(in) = a ubiquinol + NAD(+) + 4 H(+)(out)</text>
        <dbReference type="Rhea" id="RHEA:29091"/>
        <dbReference type="Rhea" id="RHEA-COMP:9565"/>
        <dbReference type="Rhea" id="RHEA-COMP:9566"/>
        <dbReference type="ChEBI" id="CHEBI:15378"/>
        <dbReference type="ChEBI" id="CHEBI:16389"/>
        <dbReference type="ChEBI" id="CHEBI:17976"/>
        <dbReference type="ChEBI" id="CHEBI:57540"/>
        <dbReference type="ChEBI" id="CHEBI:57945"/>
        <dbReference type="EC" id="7.1.1.2"/>
    </reaction>
</comment>
<comment type="subcellular location">
    <subcellularLocation>
        <location evidence="1">Mitochondrion membrane</location>
        <topology evidence="1">Multi-pass membrane protein</topology>
    </subcellularLocation>
</comment>
<comment type="similarity">
    <text evidence="3">Belongs to the complex I subunit 4 family.</text>
</comment>
<geneLocation type="mitochondrion"/>
<organism>
    <name type="scientific">Mytilus edulis</name>
    <name type="common">Blue mussel</name>
    <dbReference type="NCBI Taxonomy" id="6550"/>
    <lineage>
        <taxon>Eukaryota</taxon>
        <taxon>Metazoa</taxon>
        <taxon>Spiralia</taxon>
        <taxon>Lophotrochozoa</taxon>
        <taxon>Mollusca</taxon>
        <taxon>Bivalvia</taxon>
        <taxon>Autobranchia</taxon>
        <taxon>Pteriomorphia</taxon>
        <taxon>Mytilida</taxon>
        <taxon>Mytiloidea</taxon>
        <taxon>Mytilidae</taxon>
        <taxon>Mytilinae</taxon>
        <taxon>Mytilus</taxon>
    </lineage>
</organism>
<protein>
    <recommendedName>
        <fullName>NADH-ubiquinone oxidoreductase chain 4</fullName>
        <ecNumber>7.1.1.2</ecNumber>
    </recommendedName>
    <alternativeName>
        <fullName>NADH dehydrogenase subunit 4</fullName>
    </alternativeName>
</protein>
<proteinExistence type="inferred from homology"/>
<keyword id="KW-0249">Electron transport</keyword>
<keyword id="KW-0472">Membrane</keyword>
<keyword id="KW-0496">Mitochondrion</keyword>
<keyword id="KW-0520">NAD</keyword>
<keyword id="KW-0679">Respiratory chain</keyword>
<keyword id="KW-1278">Translocase</keyword>
<keyword id="KW-0812">Transmembrane</keyword>
<keyword id="KW-1133">Transmembrane helix</keyword>
<keyword id="KW-0813">Transport</keyword>
<keyword id="KW-0830">Ubiquinone</keyword>